<dbReference type="EMBL" id="AB001684">
    <property type="protein sequence ID" value="BAA57901.1"/>
    <property type="molecule type" value="Genomic_DNA"/>
</dbReference>
<dbReference type="PIR" id="T07254">
    <property type="entry name" value="T07254"/>
</dbReference>
<dbReference type="RefSeq" id="NP_045826.1">
    <property type="nucleotide sequence ID" value="NC_001865.1"/>
</dbReference>
<dbReference type="PDB" id="8BD3">
    <property type="method" value="EM"/>
    <property type="resolution" value="2.73 A"/>
    <property type="chains" value="L/l=2-38"/>
</dbReference>
<dbReference type="PDBsum" id="8BD3"/>
<dbReference type="EMDB" id="EMD-15973"/>
<dbReference type="SMR" id="P56339"/>
<dbReference type="GeneID" id="809163"/>
<dbReference type="OrthoDB" id="99at2759"/>
<dbReference type="GO" id="GO:0009535">
    <property type="term" value="C:chloroplast thylakoid membrane"/>
    <property type="evidence" value="ECO:0007669"/>
    <property type="project" value="UniProtKB-SubCell"/>
</dbReference>
<dbReference type="GO" id="GO:0009539">
    <property type="term" value="C:photosystem II reaction center"/>
    <property type="evidence" value="ECO:0007669"/>
    <property type="project" value="InterPro"/>
</dbReference>
<dbReference type="GO" id="GO:0015979">
    <property type="term" value="P:photosynthesis"/>
    <property type="evidence" value="ECO:0007669"/>
    <property type="project" value="UniProtKB-UniRule"/>
</dbReference>
<dbReference type="HAMAP" id="MF_01317">
    <property type="entry name" value="PSII_PsbL"/>
    <property type="match status" value="1"/>
</dbReference>
<dbReference type="InterPro" id="IPR003372">
    <property type="entry name" value="PSII_PsbL"/>
</dbReference>
<dbReference type="InterPro" id="IPR037266">
    <property type="entry name" value="PSII_PsbL_sf"/>
</dbReference>
<dbReference type="NCBIfam" id="NF001972">
    <property type="entry name" value="PRK00753.1"/>
    <property type="match status" value="1"/>
</dbReference>
<dbReference type="Pfam" id="PF02419">
    <property type="entry name" value="PsbL"/>
    <property type="match status" value="1"/>
</dbReference>
<dbReference type="SUPFAM" id="SSF161017">
    <property type="entry name" value="Photosystem II reaction center protein L, PsbL"/>
    <property type="match status" value="1"/>
</dbReference>
<sequence length="38" mass="4388">MAKPNPNKQSVELNRTSLYWGLLLIFVLAVLFSSYIFN</sequence>
<comment type="function">
    <text evidence="1">One of the components of the core complex of photosystem II (PSII). PSII is a light-driven water:plastoquinone oxidoreductase that uses light energy to abstract electrons from H(2)O, generating O(2) and a proton gradient subsequently used for ATP formation. It consists of a core antenna complex that captures photons, and an electron transfer chain that converts photonic excitation into a charge separation. This subunit is found at the monomer-monomer interface and is required for correct PSII assembly and/or dimerization.</text>
</comment>
<comment type="subunit">
    <text evidence="1">PSII is composed of 1 copy each of membrane proteins PsbA, PsbB, PsbC, PsbD, PsbE, PsbF, PsbH, PsbI, PsbJ, PsbK, PsbL, PsbM, PsbT, PsbX, PsbY, PsbZ, Psb30/Ycf12, at least 3 peripheral proteins of the oxygen-evolving complex and a large number of cofactors. It forms dimeric complexes.</text>
</comment>
<comment type="subcellular location">
    <subcellularLocation>
        <location evidence="1">Plastid</location>
        <location evidence="1">Chloroplast thylakoid membrane</location>
        <topology evidence="1">Single-pass membrane protein</topology>
    </subcellularLocation>
</comment>
<comment type="similarity">
    <text evidence="1">Belongs to the PsbL family.</text>
</comment>
<geneLocation type="chloroplast"/>
<organism>
    <name type="scientific">Chlorella vulgaris</name>
    <name type="common">Green alga</name>
    <dbReference type="NCBI Taxonomy" id="3077"/>
    <lineage>
        <taxon>Eukaryota</taxon>
        <taxon>Viridiplantae</taxon>
        <taxon>Chlorophyta</taxon>
        <taxon>core chlorophytes</taxon>
        <taxon>Trebouxiophyceae</taxon>
        <taxon>Chlorellales</taxon>
        <taxon>Chlorellaceae</taxon>
        <taxon>Chlorella clade</taxon>
        <taxon>Chlorella</taxon>
    </lineage>
</organism>
<accession>P56339</accession>
<feature type="chain" id="PRO_0000219698" description="Photosystem II reaction center protein L">
    <location>
        <begin position="1"/>
        <end position="38"/>
    </location>
</feature>
<feature type="transmembrane region" description="Helical" evidence="1">
    <location>
        <begin position="17"/>
        <end position="37"/>
    </location>
</feature>
<proteinExistence type="evidence at protein level"/>
<evidence type="ECO:0000255" key="1">
    <source>
        <dbReference type="HAMAP-Rule" id="MF_01317"/>
    </source>
</evidence>
<name>PSBL_CHLVU</name>
<gene>
    <name evidence="1" type="primary">psbL</name>
</gene>
<reference key="1">
    <citation type="journal article" date="1997" name="Proc. Natl. Acad. Sci. U.S.A.">
        <title>Complete nucleotide sequence of the chloroplast genome from the green alga Chlorella vulgaris: the existence of genes possibly involved in chloroplast division.</title>
        <authorList>
            <person name="Wakasugi T."/>
            <person name="Nagai T."/>
            <person name="Kapoor M."/>
            <person name="Sugita M."/>
            <person name="Ito M."/>
            <person name="Ito S."/>
            <person name="Tsudzuki J."/>
            <person name="Nakashima K."/>
            <person name="Tsudzuki T."/>
            <person name="Suzuki Y."/>
            <person name="Hamada A."/>
            <person name="Ohta T."/>
            <person name="Inamura A."/>
            <person name="Yoshinaga K."/>
            <person name="Sugiura M."/>
        </authorList>
    </citation>
    <scope>NUCLEOTIDE SEQUENCE [LARGE SCALE GENOMIC DNA]</scope>
    <source>
        <strain>IAM C-27 / Tamiya</strain>
    </source>
</reference>
<keyword id="KW-0002">3D-structure</keyword>
<keyword id="KW-0150">Chloroplast</keyword>
<keyword id="KW-0472">Membrane</keyword>
<keyword id="KW-0602">Photosynthesis</keyword>
<keyword id="KW-0604">Photosystem II</keyword>
<keyword id="KW-0934">Plastid</keyword>
<keyword id="KW-0674">Reaction center</keyword>
<keyword id="KW-0793">Thylakoid</keyword>
<keyword id="KW-0812">Transmembrane</keyword>
<keyword id="KW-1133">Transmembrane helix</keyword>
<protein>
    <recommendedName>
        <fullName evidence="1">Photosystem II reaction center protein L</fullName>
        <shortName evidence="1">PSII-L</shortName>
    </recommendedName>
</protein>